<comment type="function">
    <text evidence="1">Part of a stress-induced multi-chaperone system, it is involved in the recovery of the cell from heat-induced damage, in cooperation with DnaK, DnaJ and GrpE. Acts before DnaK, in the processing of protein aggregates. Protein binding stimulates the ATPase activity; ATP hydrolysis unfolds the denatured protein aggregates, which probably helps expose new hydrophobic binding sites on the surface of ClpB-bound aggregates, contributing to the solubilization and refolding of denatured protein aggregates by DnaK (By similarity).</text>
</comment>
<comment type="subunit">
    <text evidence="1">Homohexamer. The oligomerization is ATP-dependent (By similarity).</text>
</comment>
<comment type="subcellular location">
    <subcellularLocation>
        <location evidence="3">Cytoplasm</location>
    </subcellularLocation>
</comment>
<comment type="domain">
    <text evidence="1">The Clp repeat (R) domain probably functions as a substrate-discriminating domain, recruiting aggregated proteins to the ClpB hexamer and/or stabilizing bound proteins. The NBD2 domain is responsible for oligomerization, whereas the NBD1 domain stabilizes the hexamer probably in an ATP-dependent manner. The movement of the coiled-coil domain is essential for ClpB ability to rescue proteins from an aggregated state, probably by pulling apart large aggregated proteins, which are bound between the coiled-coils motifs of adjacent ClpB subunits in the functional hexamer (By similarity).</text>
</comment>
<comment type="similarity">
    <text evidence="3">Belongs to the ClpA/ClpB family.</text>
</comment>
<gene>
    <name type="primary">clpB</name>
    <name type="ordered locus">BB3293</name>
</gene>
<feature type="chain" id="PRO_0000191095" description="Chaperone protein ClpB">
    <location>
        <begin position="1"/>
        <end position="865"/>
    </location>
</feature>
<feature type="domain" description="Clp R" evidence="2">
    <location>
        <begin position="3"/>
        <end position="145"/>
    </location>
</feature>
<feature type="region of interest" description="Repeat 1" evidence="2">
    <location>
        <begin position="6"/>
        <end position="71"/>
    </location>
</feature>
<feature type="region of interest" description="Repeat 2" evidence="2">
    <location>
        <begin position="82"/>
        <end position="145"/>
    </location>
</feature>
<feature type="region of interest" description="NBD1" evidence="1">
    <location>
        <begin position="158"/>
        <end position="339"/>
    </location>
</feature>
<feature type="region of interest" description="Linker" evidence="1">
    <location>
        <begin position="340"/>
        <end position="551"/>
    </location>
</feature>
<feature type="region of interest" description="NBD2" evidence="1">
    <location>
        <begin position="561"/>
        <end position="770"/>
    </location>
</feature>
<feature type="region of interest" description="C-terminal" evidence="1">
    <location>
        <begin position="771"/>
        <end position="865"/>
    </location>
</feature>
<feature type="coiled-coil region" evidence="1">
    <location>
        <begin position="390"/>
        <end position="524"/>
    </location>
</feature>
<feature type="binding site" evidence="1">
    <location>
        <begin position="205"/>
        <end position="212"/>
    </location>
    <ligand>
        <name>ATP</name>
        <dbReference type="ChEBI" id="CHEBI:30616"/>
        <label>1</label>
    </ligand>
</feature>
<feature type="binding site" evidence="1">
    <location>
        <begin position="611"/>
        <end position="618"/>
    </location>
    <ligand>
        <name>ATP</name>
        <dbReference type="ChEBI" id="CHEBI:30616"/>
        <label>2</label>
    </ligand>
</feature>
<keyword id="KW-0067">ATP-binding</keyword>
<keyword id="KW-0143">Chaperone</keyword>
<keyword id="KW-0175">Coiled coil</keyword>
<keyword id="KW-0963">Cytoplasm</keyword>
<keyword id="KW-0547">Nucleotide-binding</keyword>
<keyword id="KW-0677">Repeat</keyword>
<keyword id="KW-0346">Stress response</keyword>
<name>CLPB_BORBR</name>
<organism>
    <name type="scientific">Bordetella bronchiseptica (strain ATCC BAA-588 / NCTC 13252 / RB50)</name>
    <name type="common">Alcaligenes bronchisepticus</name>
    <dbReference type="NCBI Taxonomy" id="257310"/>
    <lineage>
        <taxon>Bacteria</taxon>
        <taxon>Pseudomonadati</taxon>
        <taxon>Pseudomonadota</taxon>
        <taxon>Betaproteobacteria</taxon>
        <taxon>Burkholderiales</taxon>
        <taxon>Alcaligenaceae</taxon>
        <taxon>Bordetella</taxon>
    </lineage>
</organism>
<accession>Q7WHB6</accession>
<proteinExistence type="inferred from homology"/>
<protein>
    <recommendedName>
        <fullName>Chaperone protein ClpB</fullName>
    </recommendedName>
</protein>
<reference key="1">
    <citation type="journal article" date="2003" name="Nat. Genet.">
        <title>Comparative analysis of the genome sequences of Bordetella pertussis, Bordetella parapertussis and Bordetella bronchiseptica.</title>
        <authorList>
            <person name="Parkhill J."/>
            <person name="Sebaihia M."/>
            <person name="Preston A."/>
            <person name="Murphy L.D."/>
            <person name="Thomson N.R."/>
            <person name="Harris D.E."/>
            <person name="Holden M.T.G."/>
            <person name="Churcher C.M."/>
            <person name="Bentley S.D."/>
            <person name="Mungall K.L."/>
            <person name="Cerdeno-Tarraga A.-M."/>
            <person name="Temple L."/>
            <person name="James K.D."/>
            <person name="Harris B."/>
            <person name="Quail M.A."/>
            <person name="Achtman M."/>
            <person name="Atkin R."/>
            <person name="Baker S."/>
            <person name="Basham D."/>
            <person name="Bason N."/>
            <person name="Cherevach I."/>
            <person name="Chillingworth T."/>
            <person name="Collins M."/>
            <person name="Cronin A."/>
            <person name="Davis P."/>
            <person name="Doggett J."/>
            <person name="Feltwell T."/>
            <person name="Goble A."/>
            <person name="Hamlin N."/>
            <person name="Hauser H."/>
            <person name="Holroyd S."/>
            <person name="Jagels K."/>
            <person name="Leather S."/>
            <person name="Moule S."/>
            <person name="Norberczak H."/>
            <person name="O'Neil S."/>
            <person name="Ormond D."/>
            <person name="Price C."/>
            <person name="Rabbinowitsch E."/>
            <person name="Rutter S."/>
            <person name="Sanders M."/>
            <person name="Saunders D."/>
            <person name="Seeger K."/>
            <person name="Sharp S."/>
            <person name="Simmonds M."/>
            <person name="Skelton J."/>
            <person name="Squares R."/>
            <person name="Squares S."/>
            <person name="Stevens K."/>
            <person name="Unwin L."/>
            <person name="Whitehead S."/>
            <person name="Barrell B.G."/>
            <person name="Maskell D.J."/>
        </authorList>
    </citation>
    <scope>NUCLEOTIDE SEQUENCE [LARGE SCALE GENOMIC DNA]</scope>
    <source>
        <strain>ATCC BAA-588 / NCTC 13252 / RB50</strain>
    </source>
</reference>
<evidence type="ECO:0000250" key="1"/>
<evidence type="ECO:0000255" key="2">
    <source>
        <dbReference type="PROSITE-ProRule" id="PRU01251"/>
    </source>
</evidence>
<evidence type="ECO:0000305" key="3"/>
<sequence>MRFDKLTTKFQQALADAQSLAARNDHPYIEPVHVLAALLGDPDSGAASLLARAGVAVNRVQPAIDSALKGLPQVQGEDNVQVGRELQSVLVRTDKEAARRGDTYIASELFLLALADDKGDAGRILREAGLQKKALEAAIDAVRGGENVSGAEGESNREALSKYTLDLTERARQGKLDPVIGRDDEIRRTIQILQRRTKNNPVLIGEPGVGKTAIVEGLAQRIVNDEVPETLRGKRVLSLDLAALLAGAKFRGEFEERLKAVLKELAQDDGQNIVFIDELHTMVGAGKAEGAMDAGNMLKPALARGELHCIGATTLDEYRKYIEKDAALERRFQKVLVGEPDVESTIAILRGLQERYELHHGVEITDPAIVAAAELSHRYITDRFLPDKAIDLIDEAGARIRMEIDSKPEVMDRLDRRIIQLKIEREAVKKETDDASMRRLAVIEEELEKLQREYNDYEEIWKAEKAAVQGTQAIKEEIDRVRAEMAELQRKGQFDKLAELQYGKLPELEARLKAADSAEREAGESDSGKPRLLRTQVGAEEIAEVVSRATGIPVAKMMQGERDKLLRMEDFLHKRVVGQDEAVRLVSDAIRRSRAGLADPSRPYGSFLFLGPTGVGKTELTRALADFLFDSEEHMIRIDMSEFMEKHSVARLIGAPPGYVGYEEGGYLTEAVRRKPYSVILLDEVEKAHPDVFNVLLQVLDDGRLTDGQGRTVDFRNTVIVMTSNLGSQHIQSMAGKPYEVIKEVVWDELKHTFRPEFLNRIDEVVVFHGLEAQHIESIARIQLKRLGERLEKQEMRLDVSDAALAEIARSGFDPVFGARPLKRAIQQQIENPVAKLILEGVFGPRDVVPVDWQDGKFVFTRTLQ</sequence>
<dbReference type="EMBL" id="BX640447">
    <property type="protein sequence ID" value="CAE33785.1"/>
    <property type="molecule type" value="Genomic_DNA"/>
</dbReference>
<dbReference type="RefSeq" id="WP_003810451.1">
    <property type="nucleotide sequence ID" value="NC_002927.3"/>
</dbReference>
<dbReference type="SMR" id="Q7WHB6"/>
<dbReference type="GeneID" id="56479407"/>
<dbReference type="KEGG" id="bbr:BB3293"/>
<dbReference type="eggNOG" id="COG0542">
    <property type="taxonomic scope" value="Bacteria"/>
</dbReference>
<dbReference type="HOGENOM" id="CLU_005070_4_0_4"/>
<dbReference type="Proteomes" id="UP000001027">
    <property type="component" value="Chromosome"/>
</dbReference>
<dbReference type="GO" id="GO:0005737">
    <property type="term" value="C:cytoplasm"/>
    <property type="evidence" value="ECO:0007669"/>
    <property type="project" value="UniProtKB-SubCell"/>
</dbReference>
<dbReference type="GO" id="GO:0005524">
    <property type="term" value="F:ATP binding"/>
    <property type="evidence" value="ECO:0007669"/>
    <property type="project" value="UniProtKB-KW"/>
</dbReference>
<dbReference type="GO" id="GO:0016887">
    <property type="term" value="F:ATP hydrolysis activity"/>
    <property type="evidence" value="ECO:0007669"/>
    <property type="project" value="InterPro"/>
</dbReference>
<dbReference type="GO" id="GO:0034605">
    <property type="term" value="P:cellular response to heat"/>
    <property type="evidence" value="ECO:0007669"/>
    <property type="project" value="TreeGrafter"/>
</dbReference>
<dbReference type="GO" id="GO:0042026">
    <property type="term" value="P:protein refolding"/>
    <property type="evidence" value="ECO:0007669"/>
    <property type="project" value="InterPro"/>
</dbReference>
<dbReference type="CDD" id="cd00009">
    <property type="entry name" value="AAA"/>
    <property type="match status" value="1"/>
</dbReference>
<dbReference type="CDD" id="cd19499">
    <property type="entry name" value="RecA-like_ClpB_Hsp104-like"/>
    <property type="match status" value="1"/>
</dbReference>
<dbReference type="FunFam" id="1.10.8.60:FF:000017">
    <property type="entry name" value="ATP-dependent chaperone ClpB"/>
    <property type="match status" value="1"/>
</dbReference>
<dbReference type="FunFam" id="3.40.50.300:FF:000120">
    <property type="entry name" value="ATP-dependent chaperone ClpB"/>
    <property type="match status" value="1"/>
</dbReference>
<dbReference type="FunFam" id="3.40.50.300:FF:000025">
    <property type="entry name" value="ATP-dependent Clp protease subunit"/>
    <property type="match status" value="1"/>
</dbReference>
<dbReference type="FunFam" id="3.40.50.300:FF:000010">
    <property type="entry name" value="Chaperone clpB 1, putative"/>
    <property type="match status" value="1"/>
</dbReference>
<dbReference type="Gene3D" id="1.10.8.60">
    <property type="match status" value="1"/>
</dbReference>
<dbReference type="Gene3D" id="1.10.1780.10">
    <property type="entry name" value="Clp, N-terminal domain"/>
    <property type="match status" value="1"/>
</dbReference>
<dbReference type="Gene3D" id="3.40.50.300">
    <property type="entry name" value="P-loop containing nucleotide triphosphate hydrolases"/>
    <property type="match status" value="3"/>
</dbReference>
<dbReference type="InterPro" id="IPR003593">
    <property type="entry name" value="AAA+_ATPase"/>
</dbReference>
<dbReference type="InterPro" id="IPR003959">
    <property type="entry name" value="ATPase_AAA_core"/>
</dbReference>
<dbReference type="InterPro" id="IPR017730">
    <property type="entry name" value="Chaperonin_ClpB"/>
</dbReference>
<dbReference type="InterPro" id="IPR019489">
    <property type="entry name" value="Clp_ATPase_C"/>
</dbReference>
<dbReference type="InterPro" id="IPR036628">
    <property type="entry name" value="Clp_N_dom_sf"/>
</dbReference>
<dbReference type="InterPro" id="IPR004176">
    <property type="entry name" value="Clp_R_dom"/>
</dbReference>
<dbReference type="InterPro" id="IPR001270">
    <property type="entry name" value="ClpA/B"/>
</dbReference>
<dbReference type="InterPro" id="IPR018368">
    <property type="entry name" value="ClpA/B_CS1"/>
</dbReference>
<dbReference type="InterPro" id="IPR028299">
    <property type="entry name" value="ClpA/B_CS2"/>
</dbReference>
<dbReference type="InterPro" id="IPR041546">
    <property type="entry name" value="ClpA/ClpB_AAA_lid"/>
</dbReference>
<dbReference type="InterPro" id="IPR050130">
    <property type="entry name" value="ClpA_ClpB"/>
</dbReference>
<dbReference type="InterPro" id="IPR027417">
    <property type="entry name" value="P-loop_NTPase"/>
</dbReference>
<dbReference type="NCBIfam" id="TIGR03346">
    <property type="entry name" value="chaperone_ClpB"/>
    <property type="match status" value="1"/>
</dbReference>
<dbReference type="PANTHER" id="PTHR11638">
    <property type="entry name" value="ATP-DEPENDENT CLP PROTEASE"/>
    <property type="match status" value="1"/>
</dbReference>
<dbReference type="PANTHER" id="PTHR11638:SF18">
    <property type="entry name" value="HEAT SHOCK PROTEIN 104"/>
    <property type="match status" value="1"/>
</dbReference>
<dbReference type="Pfam" id="PF00004">
    <property type="entry name" value="AAA"/>
    <property type="match status" value="1"/>
</dbReference>
<dbReference type="Pfam" id="PF07724">
    <property type="entry name" value="AAA_2"/>
    <property type="match status" value="1"/>
</dbReference>
<dbReference type="Pfam" id="PF17871">
    <property type="entry name" value="AAA_lid_9"/>
    <property type="match status" value="1"/>
</dbReference>
<dbReference type="Pfam" id="PF02861">
    <property type="entry name" value="Clp_N"/>
    <property type="match status" value="2"/>
</dbReference>
<dbReference type="Pfam" id="PF10431">
    <property type="entry name" value="ClpB_D2-small"/>
    <property type="match status" value="1"/>
</dbReference>
<dbReference type="PRINTS" id="PR00300">
    <property type="entry name" value="CLPPROTEASEA"/>
</dbReference>
<dbReference type="SMART" id="SM00382">
    <property type="entry name" value="AAA"/>
    <property type="match status" value="2"/>
</dbReference>
<dbReference type="SMART" id="SM01086">
    <property type="entry name" value="ClpB_D2-small"/>
    <property type="match status" value="1"/>
</dbReference>
<dbReference type="SUPFAM" id="SSF81923">
    <property type="entry name" value="Double Clp-N motif"/>
    <property type="match status" value="1"/>
</dbReference>
<dbReference type="SUPFAM" id="SSF52540">
    <property type="entry name" value="P-loop containing nucleoside triphosphate hydrolases"/>
    <property type="match status" value="2"/>
</dbReference>
<dbReference type="PROSITE" id="PS51903">
    <property type="entry name" value="CLP_R"/>
    <property type="match status" value="1"/>
</dbReference>
<dbReference type="PROSITE" id="PS00870">
    <property type="entry name" value="CLPAB_1"/>
    <property type="match status" value="1"/>
</dbReference>
<dbReference type="PROSITE" id="PS00871">
    <property type="entry name" value="CLPAB_2"/>
    <property type="match status" value="1"/>
</dbReference>